<gene>
    <name type="primary">ydzE</name>
    <name type="ordered locus">BSU05140</name>
</gene>
<name>YDZE_BACSU</name>
<keyword id="KW-1003">Cell membrane</keyword>
<keyword id="KW-0472">Membrane</keyword>
<keyword id="KW-1185">Reference proteome</keyword>
<keyword id="KW-0812">Transmembrane</keyword>
<keyword id="KW-1133">Transmembrane helix</keyword>
<keyword id="KW-0813">Transport</keyword>
<dbReference type="EMBL" id="AL009126">
    <property type="protein sequence ID" value="CAB12321.1"/>
    <property type="molecule type" value="Genomic_DNA"/>
</dbReference>
<dbReference type="PIR" id="F69790">
    <property type="entry name" value="F69790"/>
</dbReference>
<dbReference type="RefSeq" id="NP_388395.1">
    <property type="nucleotide sequence ID" value="NC_000964.3"/>
</dbReference>
<dbReference type="RefSeq" id="WP_010886418.1">
    <property type="nucleotide sequence ID" value="NC_000964.3"/>
</dbReference>
<dbReference type="SMR" id="O31493"/>
<dbReference type="FunCoup" id="O31493">
    <property type="interactions" value="26"/>
</dbReference>
<dbReference type="STRING" id="224308.BSU05140"/>
<dbReference type="PaxDb" id="224308-BSU05140"/>
<dbReference type="EnsemblBacteria" id="CAB12321">
    <property type="protein sequence ID" value="CAB12321"/>
    <property type="gene ID" value="BSU_05140"/>
</dbReference>
<dbReference type="GeneID" id="938121"/>
<dbReference type="KEGG" id="bsu:BSU05140"/>
<dbReference type="PATRIC" id="fig|224308.179.peg.549"/>
<dbReference type="eggNOG" id="COG0697">
    <property type="taxonomic scope" value="Bacteria"/>
</dbReference>
<dbReference type="InParanoid" id="O31493"/>
<dbReference type="OrthoDB" id="34284at2"/>
<dbReference type="BioCyc" id="BSUB:BSU05140-MONOMER"/>
<dbReference type="Proteomes" id="UP000001570">
    <property type="component" value="Chromosome"/>
</dbReference>
<dbReference type="GO" id="GO:0005886">
    <property type="term" value="C:plasma membrane"/>
    <property type="evidence" value="ECO:0007669"/>
    <property type="project" value="UniProtKB-SubCell"/>
</dbReference>
<dbReference type="Gene3D" id="1.10.3730.20">
    <property type="match status" value="1"/>
</dbReference>
<dbReference type="InterPro" id="IPR051258">
    <property type="entry name" value="Diverse_Substrate_Transporter"/>
</dbReference>
<dbReference type="InterPro" id="IPR000620">
    <property type="entry name" value="EamA_dom"/>
</dbReference>
<dbReference type="PANTHER" id="PTHR42920:SF15">
    <property type="entry name" value="MEMBRANE PROTEIN"/>
    <property type="match status" value="1"/>
</dbReference>
<dbReference type="PANTHER" id="PTHR42920">
    <property type="entry name" value="OS03G0707200 PROTEIN-RELATED"/>
    <property type="match status" value="1"/>
</dbReference>
<dbReference type="Pfam" id="PF00892">
    <property type="entry name" value="EamA"/>
    <property type="match status" value="1"/>
</dbReference>
<dbReference type="SUPFAM" id="SSF103481">
    <property type="entry name" value="Multidrug resistance efflux transporter EmrE"/>
    <property type="match status" value="1"/>
</dbReference>
<proteinExistence type="uncertain"/>
<organism>
    <name type="scientific">Bacillus subtilis (strain 168)</name>
    <dbReference type="NCBI Taxonomy" id="224308"/>
    <lineage>
        <taxon>Bacteria</taxon>
        <taxon>Bacillati</taxon>
        <taxon>Bacillota</taxon>
        <taxon>Bacilli</taxon>
        <taxon>Bacillales</taxon>
        <taxon>Bacillaceae</taxon>
        <taxon>Bacillus</taxon>
    </lineage>
</organism>
<evidence type="ECO:0000255" key="1"/>
<evidence type="ECO:0000305" key="2"/>
<comment type="subcellular location">
    <subcellularLocation>
        <location evidence="2">Cell membrane</location>
        <topology evidence="2">Multi-pass membrane protein</topology>
    </subcellularLocation>
</comment>
<comment type="similarity">
    <text evidence="2">Belongs to the EamA transporter family.</text>
</comment>
<comment type="caution">
    <text evidence="2">Could be the product of a pseudogene. The N-terminus is about 275 residues shorter than orthologs.</text>
</comment>
<accession>O31493</accession>
<sequence>MYLGIVSTACAFLLWNHGLQLLNASSGGLFFFFQPLVGTLLGWILLGEQIGGTFWIGSFLILSGVLLVIKEKEKEVKS</sequence>
<reference key="1">
    <citation type="journal article" date="1997" name="Nature">
        <title>The complete genome sequence of the Gram-positive bacterium Bacillus subtilis.</title>
        <authorList>
            <person name="Kunst F."/>
            <person name="Ogasawara N."/>
            <person name="Moszer I."/>
            <person name="Albertini A.M."/>
            <person name="Alloni G."/>
            <person name="Azevedo V."/>
            <person name="Bertero M.G."/>
            <person name="Bessieres P."/>
            <person name="Bolotin A."/>
            <person name="Borchert S."/>
            <person name="Borriss R."/>
            <person name="Boursier L."/>
            <person name="Brans A."/>
            <person name="Braun M."/>
            <person name="Brignell S.C."/>
            <person name="Bron S."/>
            <person name="Brouillet S."/>
            <person name="Bruschi C.V."/>
            <person name="Caldwell B."/>
            <person name="Capuano V."/>
            <person name="Carter N.M."/>
            <person name="Choi S.-K."/>
            <person name="Codani J.-J."/>
            <person name="Connerton I.F."/>
            <person name="Cummings N.J."/>
            <person name="Daniel R.A."/>
            <person name="Denizot F."/>
            <person name="Devine K.M."/>
            <person name="Duesterhoeft A."/>
            <person name="Ehrlich S.D."/>
            <person name="Emmerson P.T."/>
            <person name="Entian K.-D."/>
            <person name="Errington J."/>
            <person name="Fabret C."/>
            <person name="Ferrari E."/>
            <person name="Foulger D."/>
            <person name="Fritz C."/>
            <person name="Fujita M."/>
            <person name="Fujita Y."/>
            <person name="Fuma S."/>
            <person name="Galizzi A."/>
            <person name="Galleron N."/>
            <person name="Ghim S.-Y."/>
            <person name="Glaser P."/>
            <person name="Goffeau A."/>
            <person name="Golightly E.J."/>
            <person name="Grandi G."/>
            <person name="Guiseppi G."/>
            <person name="Guy B.J."/>
            <person name="Haga K."/>
            <person name="Haiech J."/>
            <person name="Harwood C.R."/>
            <person name="Henaut A."/>
            <person name="Hilbert H."/>
            <person name="Holsappel S."/>
            <person name="Hosono S."/>
            <person name="Hullo M.-F."/>
            <person name="Itaya M."/>
            <person name="Jones L.-M."/>
            <person name="Joris B."/>
            <person name="Karamata D."/>
            <person name="Kasahara Y."/>
            <person name="Klaerr-Blanchard M."/>
            <person name="Klein C."/>
            <person name="Kobayashi Y."/>
            <person name="Koetter P."/>
            <person name="Koningstein G."/>
            <person name="Krogh S."/>
            <person name="Kumano M."/>
            <person name="Kurita K."/>
            <person name="Lapidus A."/>
            <person name="Lardinois S."/>
            <person name="Lauber J."/>
            <person name="Lazarevic V."/>
            <person name="Lee S.-M."/>
            <person name="Levine A."/>
            <person name="Liu H."/>
            <person name="Masuda S."/>
            <person name="Mauel C."/>
            <person name="Medigue C."/>
            <person name="Medina N."/>
            <person name="Mellado R.P."/>
            <person name="Mizuno M."/>
            <person name="Moestl D."/>
            <person name="Nakai S."/>
            <person name="Noback M."/>
            <person name="Noone D."/>
            <person name="O'Reilly M."/>
            <person name="Ogawa K."/>
            <person name="Ogiwara A."/>
            <person name="Oudega B."/>
            <person name="Park S.-H."/>
            <person name="Parro V."/>
            <person name="Pohl T.M."/>
            <person name="Portetelle D."/>
            <person name="Porwollik S."/>
            <person name="Prescott A.M."/>
            <person name="Presecan E."/>
            <person name="Pujic P."/>
            <person name="Purnelle B."/>
            <person name="Rapoport G."/>
            <person name="Rey M."/>
            <person name="Reynolds S."/>
            <person name="Rieger M."/>
            <person name="Rivolta C."/>
            <person name="Rocha E."/>
            <person name="Roche B."/>
            <person name="Rose M."/>
            <person name="Sadaie Y."/>
            <person name="Sato T."/>
            <person name="Scanlan E."/>
            <person name="Schleich S."/>
            <person name="Schroeter R."/>
            <person name="Scoffone F."/>
            <person name="Sekiguchi J."/>
            <person name="Sekowska A."/>
            <person name="Seror S.J."/>
            <person name="Serror P."/>
            <person name="Shin B.-S."/>
            <person name="Soldo B."/>
            <person name="Sorokin A."/>
            <person name="Tacconi E."/>
            <person name="Takagi T."/>
            <person name="Takahashi H."/>
            <person name="Takemaru K."/>
            <person name="Takeuchi M."/>
            <person name="Tamakoshi A."/>
            <person name="Tanaka T."/>
            <person name="Terpstra P."/>
            <person name="Tognoni A."/>
            <person name="Tosato V."/>
            <person name="Uchiyama S."/>
            <person name="Vandenbol M."/>
            <person name="Vannier F."/>
            <person name="Vassarotti A."/>
            <person name="Viari A."/>
            <person name="Wambutt R."/>
            <person name="Wedler E."/>
            <person name="Wedler H."/>
            <person name="Weitzenegger T."/>
            <person name="Winters P."/>
            <person name="Wipat A."/>
            <person name="Yamamoto H."/>
            <person name="Yamane K."/>
            <person name="Yasumoto K."/>
            <person name="Yata K."/>
            <person name="Yoshida K."/>
            <person name="Yoshikawa H.-F."/>
            <person name="Zumstein E."/>
            <person name="Yoshikawa H."/>
            <person name="Danchin A."/>
        </authorList>
    </citation>
    <scope>NUCLEOTIDE SEQUENCE [LARGE SCALE GENOMIC DNA]</scope>
    <source>
        <strain>168</strain>
    </source>
</reference>
<feature type="chain" id="PRO_0000390295" description="Putative permease-like protein YdzE">
    <location>
        <begin position="1"/>
        <end position="78"/>
    </location>
</feature>
<feature type="transmembrane region" description="Helical" evidence="1">
    <location>
        <begin position="2"/>
        <end position="22"/>
    </location>
</feature>
<feature type="transmembrane region" description="Helical" evidence="1">
    <location>
        <begin position="27"/>
        <end position="47"/>
    </location>
</feature>
<feature type="transmembrane region" description="Helical" evidence="1">
    <location>
        <begin position="49"/>
        <end position="69"/>
    </location>
</feature>
<feature type="domain" description="EamA">
    <location>
        <begin position="2"/>
        <end position="70"/>
    </location>
</feature>
<protein>
    <recommendedName>
        <fullName>Putative permease-like protein YdzE</fullName>
    </recommendedName>
</protein>